<reference evidence="20" key="1">
    <citation type="journal article" date="2004" name="Eur. J. Biochem.">
        <title>Volkensin from Adenia volkensii Harms (kilyambiti plant), a type 2 ribosome-inactivating protein.</title>
        <authorList>
            <person name="Chambery A."/>
            <person name="Di Maro A."/>
            <person name="Monti M.M."/>
            <person name="Stirpe F."/>
            <person name="Parente A."/>
        </authorList>
    </citation>
    <scope>NUCLEOTIDE SEQUENCE [GENOMIC DNA]</scope>
    <scope>PROTEIN SEQUENCE OF 1-31; 23-38; 69-107; 101-123; 105-117; 117-155; 118-139; 124-139; 127-137; 160-191; 168-174; 185-205; 193-222; 206-235; 222-237; 238-250; 242-250; 266-285; 302-316; 314-323; 353-368; 436-445; 445-460; 497-523 AND 506-523</scope>
    <scope>FUNCTION (VOLKENSIN A CHAIN)</scope>
    <scope>CATALYTIC ACTIVITY (VOLKENSIN A CHAIN)</scope>
    <scope>SUBUNIT</scope>
    <scope>TISSUE SPECIFICITY</scope>
    <scope>MASS SPECTROMETRY (VOLKENSIN A CHAIN)</scope>
    <scope>3D-STRUCTURE MODELING</scope>
    <source>
        <tissue evidence="14">Leaf</tissue>
        <tissue evidence="14">Root</tissue>
    </source>
</reference>
<reference key="2">
    <citation type="journal article" date="2009" name="Int. J. Biol. Macromol.">
        <title>Structural analysis of toxic volkensin, a type 2 ribosome inactivating protein from Adenia volkensii Harm (kilyambiti plant): molecular modeling and surface analysis by computational methods and limited proteolysis.</title>
        <authorList>
            <person name="Severino V."/>
            <person name="Paiardini A."/>
            <person name="Pascarella S."/>
            <person name="Parente A."/>
            <person name="Chambery A."/>
        </authorList>
    </citation>
    <scope>PROTEIN SEQUENCE OF 1-7; 101-123; 127-137 AND 507-523</scope>
    <scope>SUBUNIT</scope>
    <scope>TISSUE SPECIFICITY</scope>
    <scope>3D-STRUCTURE MODELING</scope>
    <source>
        <tissue evidence="11">Root</tissue>
    </source>
</reference>
<reference key="3">
    <citation type="journal article" date="1985" name="J. Biol. Chem.">
        <title>Properties of volkensin, a toxic lectin from Adenia volkensii.</title>
        <authorList>
            <person name="Stirpe F."/>
            <person name="Barbieri L."/>
            <person name="Abbondanza A."/>
            <person name="Falasca A.I."/>
            <person name="Brown A.N."/>
            <person name="Sandvig K."/>
            <person name="Olsnes S."/>
            <person name="Pihl A."/>
        </authorList>
    </citation>
    <scope>FUNCTION (VOLKENSIN A CHAIN AND VOLKENSIN B CHAIN)</scope>
    <scope>CATALYTIC ACTIVITY (VOLKENSIN A CHAIN)</scope>
    <scope>ACTIVITY REGULATION (VOLKENSIN B CHAIN)</scope>
    <scope>BIOPHYSICOCHEMICAL PROPERTIES (VOLKENSIN A CHAIN)</scope>
    <scope>SUBUNIT</scope>
    <scope>TISSUE SPECIFICITY</scope>
    <scope>GLYCOSYLATION</scope>
    <scope>TOXIC DOSE</scope>
</reference>
<reference key="4">
    <citation type="journal article" date="1989" name="Biochem. J.">
        <title>Effect of alpha-sarcin and ribosome-inactivating proteins on the interaction of elongation factors with ribosomes.</title>
        <authorList>
            <person name="Brigotti M."/>
            <person name="Rambelli F."/>
            <person name="Zamboni M."/>
            <person name="Montanaro L."/>
            <person name="Sperti S."/>
        </authorList>
    </citation>
    <scope>FUNCTION (VOLKENSIN A CHAIN)</scope>
</reference>
<reference key="5">
    <citation type="journal article" date="2005" name="Clin. Exp. Allergy">
        <title>Occupational sensitization to ribosome-inactivating proteins in researchers.</title>
        <authorList>
            <person name="Szalai K."/>
            <person name="Schoell I."/>
            <person name="Foerster-Waldl E."/>
            <person name="Polito L."/>
            <person name="Bolognesi A."/>
            <person name="Untersmayr E."/>
            <person name="Riemer A.B."/>
            <person name="Boltz-Nitulescu G."/>
            <person name="Stirpe F."/>
            <person name="Jensen-Jarolim E."/>
        </authorList>
    </citation>
    <scope>ALLERGEN</scope>
</reference>
<reference key="6">
    <citation type="journal article" date="2007" name="Protein Expr. Purif.">
        <title>Cloning and expression of the B chain of volkensin, type 2 ribosome inactivating protein from Adenia volkensii harms: co-folding with the A chain for heterodimer reconstitution.</title>
        <authorList>
            <person name="Chambery A."/>
            <person name="Severino V."/>
            <person name="Stirpe F."/>
            <person name="Parente A."/>
        </authorList>
    </citation>
    <scope>FUNCTION (VOLKENSIN A CHAIN AND VOLKENSIN B CHAIN)</scope>
    <scope>CATALYTIC ACTIVITY (VOLKENSIN A CHAIN)</scope>
    <scope>SUBUNIT</scope>
    <scope>TISSUE SPECIFICITY</scope>
</reference>
<keyword id="KW-0020">Allergen</keyword>
<keyword id="KW-0903">Direct protein sequencing</keyword>
<keyword id="KW-1015">Disulfide bond</keyword>
<keyword id="KW-0325">Glycoprotein</keyword>
<keyword id="KW-0326">Glycosidase</keyword>
<keyword id="KW-0378">Hydrolase</keyword>
<keyword id="KW-0430">Lectin</keyword>
<keyword id="KW-0611">Plant defense</keyword>
<keyword id="KW-0652">Protein synthesis inhibitor</keyword>
<keyword id="KW-0800">Toxin</keyword>
<gene>
    <name evidence="20" type="primary">volk38</name>
</gene>
<proteinExistence type="evidence at protein level"/>
<feature type="chain" id="PRO_0000449524" description="Volkensin A chain" evidence="19">
    <location>
        <begin position="1" status="less than"/>
        <end position="250"/>
    </location>
</feature>
<feature type="propeptide" id="PRO_0000449525" description="Linker peptide" evidence="19">
    <location>
        <begin position="251"/>
        <end position="265"/>
    </location>
</feature>
<feature type="chain" id="PRO_0000449526" description="Volkensin B chain" evidence="19">
    <location>
        <begin position="266"/>
        <end position="523" status="greater than"/>
    </location>
</feature>
<feature type="domain" description="Ricin B-type lectin 1" evidence="6">
    <location>
        <begin position="270"/>
        <end position="397"/>
    </location>
</feature>
<feature type="domain" description="Ricin B-type lectin 2" evidence="6">
    <location>
        <begin position="400"/>
        <end position="523"/>
    </location>
</feature>
<feature type="active site" evidence="4">
    <location>
        <position position="74"/>
    </location>
</feature>
<feature type="active site" evidence="4">
    <location>
        <position position="113"/>
    </location>
</feature>
<feature type="active site" evidence="4">
    <location>
        <position position="162"/>
    </location>
</feature>
<feature type="active site" evidence="4">
    <location>
        <position position="165"/>
    </location>
</feature>
<feature type="binding site" evidence="1">
    <location>
        <begin position="111"/>
        <end position="113"/>
    </location>
    <ligand>
        <name>AMP</name>
        <dbReference type="ChEBI" id="CHEBI:456215"/>
    </ligand>
</feature>
<feature type="binding site" evidence="2">
    <location>
        <begin position="287"/>
        <end position="291"/>
    </location>
    <ligand>
        <name>a carbohydrate</name>
        <dbReference type="ChEBI" id="CHEBI:16646"/>
    </ligand>
</feature>
<feature type="binding site" evidence="2">
    <location>
        <position position="300"/>
    </location>
    <ligand>
        <name>a carbohydrate</name>
        <dbReference type="ChEBI" id="CHEBI:16646"/>
    </ligand>
</feature>
<feature type="binding site" evidence="2">
    <location>
        <position position="305"/>
    </location>
    <ligand>
        <name>a carbohydrate</name>
        <dbReference type="ChEBI" id="CHEBI:16646"/>
    </ligand>
</feature>
<feature type="binding site" evidence="2">
    <location>
        <position position="311"/>
    </location>
    <ligand>
        <name>a carbohydrate</name>
        <dbReference type="ChEBI" id="CHEBI:16646"/>
    </ligand>
</feature>
<feature type="binding site" evidence="2">
    <location>
        <position position="358"/>
    </location>
    <ligand>
        <name>a carbohydrate</name>
        <dbReference type="ChEBI" id="CHEBI:16646"/>
    </ligand>
</feature>
<feature type="binding site" evidence="2">
    <location>
        <position position="398"/>
    </location>
    <ligand>
        <name>a carbohydrate</name>
        <dbReference type="ChEBI" id="CHEBI:16646"/>
    </ligand>
</feature>
<feature type="glycosylation site" description="N-linked (GlcNAc...) asparagine" evidence="7">
    <location>
        <position position="358"/>
    </location>
</feature>
<feature type="glycosylation site" description="N-linked (GlcNAc...) asparagine" evidence="7">
    <location>
        <position position="398"/>
    </location>
</feature>
<feature type="disulfide bond" description="Interchain (between A and B chains)" evidence="2">
    <location>
        <begin position="245"/>
        <end position="269"/>
    </location>
</feature>
<feature type="disulfide bond" evidence="6">
    <location>
        <begin position="285"/>
        <end position="304"/>
    </location>
</feature>
<feature type="disulfide bond" evidence="6">
    <location>
        <begin position="328"/>
        <end position="343"/>
    </location>
</feature>
<feature type="disulfide bond" evidence="6">
    <location>
        <begin position="414"/>
        <end position="427"/>
    </location>
</feature>
<feature type="disulfide bond" evidence="6">
    <location>
        <begin position="453"/>
        <end position="471"/>
    </location>
</feature>
<feature type="sequence conflict" description="In Ref. 1; AA sequence and 2; AA sequence." evidence="18" ref="1 2">
    <original>R</original>
    <variation>H</variation>
    <location>
        <position position="105"/>
    </location>
</feature>
<feature type="sequence conflict" description="In Ref. 1; AA sequence and 2; AA sequence." evidence="18" ref="1 2">
    <original>N</original>
    <variation>H</variation>
    <location>
        <position position="118"/>
    </location>
</feature>
<feature type="sequence conflict" description="In Ref. 1; AA sequence and 2; AA sequence." evidence="18" ref="1 2">
    <original>V</original>
    <variation>I</variation>
    <location>
        <position position="131"/>
    </location>
</feature>
<feature type="sequence conflict" description="In Ref. 1; AA sequence." evidence="18" ref="1">
    <original>P</original>
    <variation>L</variation>
    <location>
        <position position="180"/>
    </location>
</feature>
<feature type="sequence conflict" description="In Ref. 1; AA sequence." evidence="18" ref="1">
    <original>D</original>
    <variation>E</variation>
    <location>
        <position position="182"/>
    </location>
</feature>
<feature type="non-terminal residue" evidence="20">
    <location>
        <position position="1"/>
    </location>
</feature>
<feature type="non-terminal residue" evidence="20">
    <location>
        <position position="523"/>
    </location>
</feature>
<evidence type="ECO:0000250" key="1">
    <source>
        <dbReference type="UniProtKB" id="P02879"/>
    </source>
</evidence>
<evidence type="ECO:0000250" key="2">
    <source>
        <dbReference type="UniProtKB" id="P06750"/>
    </source>
</evidence>
<evidence type="ECO:0000250" key="3">
    <source>
        <dbReference type="UniProtKB" id="P81446"/>
    </source>
</evidence>
<evidence type="ECO:0000250" key="4">
    <source>
        <dbReference type="UniProtKB" id="P84531"/>
    </source>
</evidence>
<evidence type="ECO:0000255" key="5"/>
<evidence type="ECO:0000255" key="6">
    <source>
        <dbReference type="PROSITE-ProRule" id="PRU00174"/>
    </source>
</evidence>
<evidence type="ECO:0000255" key="7">
    <source>
        <dbReference type="PROSITE-ProRule" id="PRU00498"/>
    </source>
</evidence>
<evidence type="ECO:0000269" key="8">
    <source>
    </source>
</evidence>
<evidence type="ECO:0000269" key="9">
    <source>
    </source>
</evidence>
<evidence type="ECO:0000269" key="10">
    <source>
    </source>
</evidence>
<evidence type="ECO:0000269" key="11">
    <source>
    </source>
</evidence>
<evidence type="ECO:0000269" key="12">
    <source>
    </source>
</evidence>
<evidence type="ECO:0000269" key="13">
    <source>
    </source>
</evidence>
<evidence type="ECO:0000303" key="14">
    <source>
    </source>
</evidence>
<evidence type="ECO:0000303" key="15">
    <source>
    </source>
</evidence>
<evidence type="ECO:0000303" key="16">
    <source>
    </source>
</evidence>
<evidence type="ECO:0000303" key="17">
    <source>
    </source>
</evidence>
<evidence type="ECO:0000305" key="18"/>
<evidence type="ECO:0000305" key="19">
    <source>
    </source>
</evidence>
<evidence type="ECO:0000312" key="20">
    <source>
        <dbReference type="EMBL" id="CAD61022.1"/>
    </source>
</evidence>
<dbReference type="EC" id="3.2.2.22" evidence="8 10 13"/>
<dbReference type="EMBL" id="AJ537497">
    <property type="protein sequence ID" value="CAD61022.1"/>
    <property type="molecule type" value="Genomic_DNA"/>
</dbReference>
<dbReference type="SMR" id="Q70US9"/>
<dbReference type="Allergome" id="2795">
    <property type="allergen name" value="Ade v RIP"/>
</dbReference>
<dbReference type="CAZy" id="CBM13">
    <property type="family name" value="Carbohydrate-Binding Module Family 13"/>
</dbReference>
<dbReference type="GlyCosmos" id="Q70US9">
    <property type="glycosylation" value="2 sites, No reported glycans"/>
</dbReference>
<dbReference type="GO" id="GO:0030246">
    <property type="term" value="F:carbohydrate binding"/>
    <property type="evidence" value="ECO:0007669"/>
    <property type="project" value="UniProtKB-KW"/>
</dbReference>
<dbReference type="GO" id="GO:0030598">
    <property type="term" value="F:rRNA N-glycosylase activity"/>
    <property type="evidence" value="ECO:0007669"/>
    <property type="project" value="UniProtKB-EC"/>
</dbReference>
<dbReference type="GO" id="GO:0090729">
    <property type="term" value="F:toxin activity"/>
    <property type="evidence" value="ECO:0007669"/>
    <property type="project" value="UniProtKB-KW"/>
</dbReference>
<dbReference type="GO" id="GO:0006952">
    <property type="term" value="P:defense response"/>
    <property type="evidence" value="ECO:0007669"/>
    <property type="project" value="UniProtKB-KW"/>
</dbReference>
<dbReference type="GO" id="GO:0017148">
    <property type="term" value="P:negative regulation of translation"/>
    <property type="evidence" value="ECO:0007669"/>
    <property type="project" value="UniProtKB-KW"/>
</dbReference>
<dbReference type="CDD" id="cd23443">
    <property type="entry name" value="beta-trefoil_Ricin_RIPs_II_rpt1"/>
    <property type="match status" value="1"/>
</dbReference>
<dbReference type="CDD" id="cd23444">
    <property type="entry name" value="beta-trefoil_Ricin_RIPs_II_rpt2"/>
    <property type="match status" value="1"/>
</dbReference>
<dbReference type="Gene3D" id="2.80.10.50">
    <property type="match status" value="2"/>
</dbReference>
<dbReference type="Gene3D" id="3.40.420.10">
    <property type="entry name" value="Ricin (A subunit), domain 1"/>
    <property type="match status" value="1"/>
</dbReference>
<dbReference type="Gene3D" id="4.10.470.10">
    <property type="entry name" value="Ricin (A Subunit), domain 2"/>
    <property type="match status" value="1"/>
</dbReference>
<dbReference type="InterPro" id="IPR036041">
    <property type="entry name" value="Ribosome-inact_prot_sf"/>
</dbReference>
<dbReference type="InterPro" id="IPR017989">
    <property type="entry name" value="Ribosome_inactivat_1/2"/>
</dbReference>
<dbReference type="InterPro" id="IPR001574">
    <property type="entry name" value="Ribosome_inactivat_prot"/>
</dbReference>
<dbReference type="InterPro" id="IPR017988">
    <property type="entry name" value="Ribosome_inactivat_prot_CS"/>
</dbReference>
<dbReference type="InterPro" id="IPR016138">
    <property type="entry name" value="Ribosome_inactivat_prot_sub1"/>
</dbReference>
<dbReference type="InterPro" id="IPR016139">
    <property type="entry name" value="Ribosome_inactivat_prot_sub2"/>
</dbReference>
<dbReference type="InterPro" id="IPR035992">
    <property type="entry name" value="Ricin_B-like_lectins"/>
</dbReference>
<dbReference type="InterPro" id="IPR000772">
    <property type="entry name" value="Ricin_B_lectin"/>
</dbReference>
<dbReference type="PANTHER" id="PTHR33453">
    <property type="match status" value="1"/>
</dbReference>
<dbReference type="PANTHER" id="PTHR33453:SF34">
    <property type="entry name" value="RIBOSOME-INACTIVATING PROTEIN"/>
    <property type="match status" value="1"/>
</dbReference>
<dbReference type="Pfam" id="PF00652">
    <property type="entry name" value="Ricin_B_lectin"/>
    <property type="match status" value="2"/>
</dbReference>
<dbReference type="Pfam" id="PF00161">
    <property type="entry name" value="RIP"/>
    <property type="match status" value="1"/>
</dbReference>
<dbReference type="PRINTS" id="PR00396">
    <property type="entry name" value="SHIGARICIN"/>
</dbReference>
<dbReference type="SMART" id="SM00458">
    <property type="entry name" value="RICIN"/>
    <property type="match status" value="2"/>
</dbReference>
<dbReference type="SUPFAM" id="SSF56371">
    <property type="entry name" value="Ribosome inactivating proteins (RIP)"/>
    <property type="match status" value="1"/>
</dbReference>
<dbReference type="SUPFAM" id="SSF50370">
    <property type="entry name" value="Ricin B-like lectins"/>
    <property type="match status" value="2"/>
</dbReference>
<dbReference type="PROSITE" id="PS50231">
    <property type="entry name" value="RICIN_B_LECTIN"/>
    <property type="match status" value="2"/>
</dbReference>
<dbReference type="PROSITE" id="PS00275">
    <property type="entry name" value="SHIGA_RICIN"/>
    <property type="match status" value="1"/>
</dbReference>
<protein>
    <recommendedName>
        <fullName evidence="14 15 16 17 20">Volkensin</fullName>
    </recommendedName>
    <allergenName evidence="18">Ade v RIP</allergenName>
    <component>
        <recommendedName>
            <fullName evidence="14 15 17">Volkensin A chain</fullName>
            <shortName evidence="15">VKA</shortName>
            <ecNumber evidence="8 10 13">3.2.2.22</ecNumber>
        </recommendedName>
        <alternativeName>
            <fullName evidence="14 15 16">Ribosome-inactivating protein volkensin</fullName>
            <shortName evidence="14 15">RIP VK</shortName>
        </alternativeName>
        <alternativeName>
            <fullName evidence="14">rRNA N-glycosidase</fullName>
        </alternativeName>
    </component>
    <component>
        <recommendedName>
            <fullName evidence="14 15 17">Volkensin B chain</fullName>
            <shortName evidence="15">VKB</shortName>
        </recommendedName>
    </component>
</protein>
<comment type="function">
    <molecule>Volkensin A chain</molecule>
    <text evidence="8 10 12 13">Has N-glycosidase activity and is responsible for inhibiting protein synthesis through the catalytic inactivation of 60S ribosomal subunits by removing a specific adenine of 28S rRNA (PubMed:14686924, PubMed:16997573, PubMed:2930482, PubMed:3932357). Inhibits GTP-dependent binding of EF2 (elongation factor 2) to ribosomes (PubMed:2930482).</text>
</comment>
<comment type="function">
    <molecule>Volkensin B chain</molecule>
    <text evidence="3 10 13">Binds to cell receptors and probably facilitates the entry into the cell of the A chain (By similarity). Also acts as a galactose-specific lectin responsible for cell agglutination (PubMed:16997573, PubMed:3932357).</text>
</comment>
<comment type="catalytic activity">
    <molecule>Volkensin A chain</molecule>
    <reaction evidence="5 8 10 13">
        <text>Endohydrolysis of the N-glycosidic bond at one specific adenosine on the 28S rRNA.</text>
        <dbReference type="EC" id="3.2.2.22"/>
    </reaction>
</comment>
<comment type="activity regulation">
    <molecule>Volkensin B chain</molecule>
    <text evidence="13">Hemagglutinating activity is inhibited by galactose and structurally related sugars.</text>
</comment>
<comment type="biophysicochemical properties">
    <molecule>Volkensin A chain</molecule>
    <temperatureDependence>
        <text evidence="13">Loss of protein synthesis inhibiting activity of the rabbit reticulocyte lysate by heating at 70 degrees Celsius for 20 minutes. The inhibitory activity of the solution is almost completely lost after storage for 2 weeks at 4 degrees Celsius in the presence of 1% 2-mercaptoethanol.</text>
    </temperatureDependence>
</comment>
<comment type="subunit">
    <text evidence="8 10 11 13">Disulfide-linked dimer of A and B chains.</text>
</comment>
<comment type="tissue specificity">
    <text evidence="8 10 11 13">Expressed in roots (at protein level) (PubMed:14686924, PubMed:16997573, PubMed:19591862, PubMed:3932357). Expressed in seeds (at protein level) (PubMed:3932357).</text>
</comment>
<comment type="PTM">
    <text evidence="13">N-glycosylated. Contains mannose and galactose.</text>
</comment>
<comment type="mass spectrometry">
    <molecule>Volkensin A chain</molecule>
    <text>The measured mass is that of the reduced form.</text>
</comment>
<comment type="allergen">
    <text evidence="9">Causes an allergic reaction in human. Natural protein was found to bind to IgE of a patient who had been working with ribosome-inactivating proteins for two years in a research laboratory setting.</text>
</comment>
<comment type="toxic dose">
    <text evidence="13">LD(50) is 0.32 ug/kg by intraperitoneal injection into rats (at 48 hours post-injection).</text>
</comment>
<comment type="toxic dose">
    <text evidence="13">LD(50) is 1.73 ug/kg by intraperitoneal injection into mice (at 48 hours post-injection).</text>
</comment>
<comment type="toxic dose">
    <text evidence="13">LD(50) is 0.061 ug/kg by intraperitoneal injection into rats (at 14 days post-injection).</text>
</comment>
<comment type="toxic dose">
    <text evidence="13">LD(50) is 1.38 ug/kg by intraperitoneal injection into mice (at 14 days post-injection).</text>
</comment>
<comment type="similarity">
    <text evidence="18">In the N-terminal section; belongs to the ribosome-inactivating protein family. Type 2 RIP subfamily.</text>
</comment>
<accession>Q70US9</accession>
<organism evidence="20">
    <name type="scientific">Adenia volkensii</name>
    <name type="common">Kilyambiti plant</name>
    <dbReference type="NCBI Taxonomy" id="219186"/>
    <lineage>
        <taxon>Eukaryota</taxon>
        <taxon>Viridiplantae</taxon>
        <taxon>Streptophyta</taxon>
        <taxon>Embryophyta</taxon>
        <taxon>Tracheophyta</taxon>
        <taxon>Spermatophyta</taxon>
        <taxon>Magnoliopsida</taxon>
        <taxon>eudicotyledons</taxon>
        <taxon>Gunneridae</taxon>
        <taxon>Pentapetalae</taxon>
        <taxon>rosids</taxon>
        <taxon>fabids</taxon>
        <taxon>Malpighiales</taxon>
        <taxon>Passifloraceae</taxon>
        <taxon>Adenia</taxon>
    </lineage>
</organism>
<sequence>VFPKVPFDVPKATVESYTRFIRVLRDELAGGVSPQGIRRLRNPAEIQPSQGFILIQLTGYVGSVTLIMDVRNAYLLGYLSHNVLYHFNDVSASSIASVFPDAQRRQLPFGGGYPSMRNYAPERDQIDHGIVELAYAVDRLYYSQNNNQIALGLVICAGMVAEASRFRYIEGLVRQSIVGPGDYRTFRPDALMYSIVTQWQTLSERIQGSFNGAFQPVQLGYASDPFYWDNVAQAITRLSLMLFVCSQPPRQSDSPLVIRSFVDRNDPVCPSGETTAFIVGRDGRCVDVKVEEFFDGNKVQMWPCKSSQNANQLWTLKRDGTIRCQGKCLTVRSPQLYAMIWDCTTFYAPATKWEVWDNGTIINPASGRVLTAPTGEAGVTLNLQFNEYAASQAWRVTNVTVPTVTTIVGYDDLCLETNGNGVWLANCVKGKAQQRWTLYADGTIRSQSTLSKCLACSGSCVKLAKIVNTDCAGSANSRWYFDNYGGIVNLRTGMVMDVKESNPSLNEIIAHPWHGNSNQQWFL</sequence>
<name>VOLK_ADEVO</name>